<evidence type="ECO:0000255" key="1">
    <source>
        <dbReference type="HAMAP-Rule" id="MF_01152"/>
    </source>
</evidence>
<accession>Q1QSX1</accession>
<dbReference type="EMBL" id="CP000285">
    <property type="protein sequence ID" value="ABE60437.1"/>
    <property type="molecule type" value="Genomic_DNA"/>
</dbReference>
<dbReference type="RefSeq" id="WP_011508383.1">
    <property type="nucleotide sequence ID" value="NC_007963.1"/>
</dbReference>
<dbReference type="SMR" id="Q1QSX1"/>
<dbReference type="STRING" id="290398.Csal_3093"/>
<dbReference type="GeneID" id="95335789"/>
<dbReference type="KEGG" id="csa:Csal_3093"/>
<dbReference type="eggNOG" id="COG0484">
    <property type="taxonomic scope" value="Bacteria"/>
</dbReference>
<dbReference type="HOGENOM" id="CLU_017633_0_7_6"/>
<dbReference type="OrthoDB" id="9779889at2"/>
<dbReference type="Proteomes" id="UP000000239">
    <property type="component" value="Chromosome"/>
</dbReference>
<dbReference type="GO" id="GO:0005737">
    <property type="term" value="C:cytoplasm"/>
    <property type="evidence" value="ECO:0007669"/>
    <property type="project" value="UniProtKB-SubCell"/>
</dbReference>
<dbReference type="GO" id="GO:0005524">
    <property type="term" value="F:ATP binding"/>
    <property type="evidence" value="ECO:0007669"/>
    <property type="project" value="InterPro"/>
</dbReference>
<dbReference type="GO" id="GO:0031072">
    <property type="term" value="F:heat shock protein binding"/>
    <property type="evidence" value="ECO:0007669"/>
    <property type="project" value="InterPro"/>
</dbReference>
<dbReference type="GO" id="GO:0051082">
    <property type="term" value="F:unfolded protein binding"/>
    <property type="evidence" value="ECO:0007669"/>
    <property type="project" value="UniProtKB-UniRule"/>
</dbReference>
<dbReference type="GO" id="GO:0008270">
    <property type="term" value="F:zinc ion binding"/>
    <property type="evidence" value="ECO:0007669"/>
    <property type="project" value="UniProtKB-UniRule"/>
</dbReference>
<dbReference type="GO" id="GO:0051085">
    <property type="term" value="P:chaperone cofactor-dependent protein refolding"/>
    <property type="evidence" value="ECO:0007669"/>
    <property type="project" value="TreeGrafter"/>
</dbReference>
<dbReference type="GO" id="GO:0006260">
    <property type="term" value="P:DNA replication"/>
    <property type="evidence" value="ECO:0007669"/>
    <property type="project" value="UniProtKB-KW"/>
</dbReference>
<dbReference type="GO" id="GO:0042026">
    <property type="term" value="P:protein refolding"/>
    <property type="evidence" value="ECO:0007669"/>
    <property type="project" value="TreeGrafter"/>
</dbReference>
<dbReference type="GO" id="GO:0009408">
    <property type="term" value="P:response to heat"/>
    <property type="evidence" value="ECO:0007669"/>
    <property type="project" value="InterPro"/>
</dbReference>
<dbReference type="CDD" id="cd06257">
    <property type="entry name" value="DnaJ"/>
    <property type="match status" value="1"/>
</dbReference>
<dbReference type="CDD" id="cd10747">
    <property type="entry name" value="DnaJ_C"/>
    <property type="match status" value="1"/>
</dbReference>
<dbReference type="CDD" id="cd10719">
    <property type="entry name" value="DnaJ_zf"/>
    <property type="match status" value="1"/>
</dbReference>
<dbReference type="FunFam" id="1.10.287.110:FF:000034">
    <property type="entry name" value="Chaperone protein DnaJ"/>
    <property type="match status" value="1"/>
</dbReference>
<dbReference type="FunFam" id="2.10.230.10:FF:000002">
    <property type="entry name" value="Molecular chaperone DnaJ"/>
    <property type="match status" value="1"/>
</dbReference>
<dbReference type="FunFam" id="2.60.260.20:FF:000004">
    <property type="entry name" value="Molecular chaperone DnaJ"/>
    <property type="match status" value="1"/>
</dbReference>
<dbReference type="FunFam" id="2.60.260.20:FF:000009">
    <property type="entry name" value="Putative Mitochondrial DnaJ chaperone"/>
    <property type="match status" value="1"/>
</dbReference>
<dbReference type="Gene3D" id="1.10.287.110">
    <property type="entry name" value="DnaJ domain"/>
    <property type="match status" value="1"/>
</dbReference>
<dbReference type="Gene3D" id="2.10.230.10">
    <property type="entry name" value="Heat shock protein DnaJ, cysteine-rich domain"/>
    <property type="match status" value="1"/>
</dbReference>
<dbReference type="Gene3D" id="2.60.260.20">
    <property type="entry name" value="Urease metallochaperone UreE, N-terminal domain"/>
    <property type="match status" value="2"/>
</dbReference>
<dbReference type="HAMAP" id="MF_01152">
    <property type="entry name" value="DnaJ"/>
    <property type="match status" value="1"/>
</dbReference>
<dbReference type="InterPro" id="IPR012724">
    <property type="entry name" value="DnaJ"/>
</dbReference>
<dbReference type="InterPro" id="IPR002939">
    <property type="entry name" value="DnaJ_C"/>
</dbReference>
<dbReference type="InterPro" id="IPR001623">
    <property type="entry name" value="DnaJ_domain"/>
</dbReference>
<dbReference type="InterPro" id="IPR018253">
    <property type="entry name" value="DnaJ_domain_CS"/>
</dbReference>
<dbReference type="InterPro" id="IPR008971">
    <property type="entry name" value="HSP40/DnaJ_pept-bd"/>
</dbReference>
<dbReference type="InterPro" id="IPR001305">
    <property type="entry name" value="HSP_DnaJ_Cys-rich_dom"/>
</dbReference>
<dbReference type="InterPro" id="IPR036410">
    <property type="entry name" value="HSP_DnaJ_Cys-rich_dom_sf"/>
</dbReference>
<dbReference type="InterPro" id="IPR036869">
    <property type="entry name" value="J_dom_sf"/>
</dbReference>
<dbReference type="NCBIfam" id="TIGR02349">
    <property type="entry name" value="DnaJ_bact"/>
    <property type="match status" value="1"/>
</dbReference>
<dbReference type="NCBIfam" id="NF008035">
    <property type="entry name" value="PRK10767.1"/>
    <property type="match status" value="1"/>
</dbReference>
<dbReference type="PANTHER" id="PTHR43096:SF48">
    <property type="entry name" value="CHAPERONE PROTEIN DNAJ"/>
    <property type="match status" value="1"/>
</dbReference>
<dbReference type="PANTHER" id="PTHR43096">
    <property type="entry name" value="DNAJ HOMOLOG 1, MITOCHONDRIAL-RELATED"/>
    <property type="match status" value="1"/>
</dbReference>
<dbReference type="Pfam" id="PF00226">
    <property type="entry name" value="DnaJ"/>
    <property type="match status" value="1"/>
</dbReference>
<dbReference type="Pfam" id="PF01556">
    <property type="entry name" value="DnaJ_C"/>
    <property type="match status" value="1"/>
</dbReference>
<dbReference type="Pfam" id="PF00684">
    <property type="entry name" value="DnaJ_CXXCXGXG"/>
    <property type="match status" value="1"/>
</dbReference>
<dbReference type="PRINTS" id="PR00625">
    <property type="entry name" value="JDOMAIN"/>
</dbReference>
<dbReference type="SMART" id="SM00271">
    <property type="entry name" value="DnaJ"/>
    <property type="match status" value="1"/>
</dbReference>
<dbReference type="SUPFAM" id="SSF46565">
    <property type="entry name" value="Chaperone J-domain"/>
    <property type="match status" value="1"/>
</dbReference>
<dbReference type="SUPFAM" id="SSF57938">
    <property type="entry name" value="DnaJ/Hsp40 cysteine-rich domain"/>
    <property type="match status" value="1"/>
</dbReference>
<dbReference type="SUPFAM" id="SSF49493">
    <property type="entry name" value="HSP40/DnaJ peptide-binding domain"/>
    <property type="match status" value="2"/>
</dbReference>
<dbReference type="PROSITE" id="PS00636">
    <property type="entry name" value="DNAJ_1"/>
    <property type="match status" value="1"/>
</dbReference>
<dbReference type="PROSITE" id="PS50076">
    <property type="entry name" value="DNAJ_2"/>
    <property type="match status" value="1"/>
</dbReference>
<dbReference type="PROSITE" id="PS51188">
    <property type="entry name" value="ZF_CR"/>
    <property type="match status" value="1"/>
</dbReference>
<feature type="chain" id="PRO_1000085176" description="Chaperone protein DnaJ">
    <location>
        <begin position="1"/>
        <end position="381"/>
    </location>
</feature>
<feature type="domain" description="J" evidence="1">
    <location>
        <begin position="5"/>
        <end position="70"/>
    </location>
</feature>
<feature type="repeat" description="CXXCXGXG motif">
    <location>
        <begin position="150"/>
        <end position="157"/>
    </location>
</feature>
<feature type="repeat" description="CXXCXGXG motif">
    <location>
        <begin position="167"/>
        <end position="174"/>
    </location>
</feature>
<feature type="repeat" description="CXXCXGXG motif">
    <location>
        <begin position="189"/>
        <end position="196"/>
    </location>
</feature>
<feature type="repeat" description="CXXCXGXG motif">
    <location>
        <begin position="203"/>
        <end position="210"/>
    </location>
</feature>
<feature type="zinc finger region" description="CR-type" evidence="1">
    <location>
        <begin position="137"/>
        <end position="215"/>
    </location>
</feature>
<feature type="binding site" evidence="1">
    <location>
        <position position="150"/>
    </location>
    <ligand>
        <name>Zn(2+)</name>
        <dbReference type="ChEBI" id="CHEBI:29105"/>
        <label>1</label>
    </ligand>
</feature>
<feature type="binding site" evidence="1">
    <location>
        <position position="153"/>
    </location>
    <ligand>
        <name>Zn(2+)</name>
        <dbReference type="ChEBI" id="CHEBI:29105"/>
        <label>1</label>
    </ligand>
</feature>
<feature type="binding site" evidence="1">
    <location>
        <position position="167"/>
    </location>
    <ligand>
        <name>Zn(2+)</name>
        <dbReference type="ChEBI" id="CHEBI:29105"/>
        <label>2</label>
    </ligand>
</feature>
<feature type="binding site" evidence="1">
    <location>
        <position position="170"/>
    </location>
    <ligand>
        <name>Zn(2+)</name>
        <dbReference type="ChEBI" id="CHEBI:29105"/>
        <label>2</label>
    </ligand>
</feature>
<feature type="binding site" evidence="1">
    <location>
        <position position="189"/>
    </location>
    <ligand>
        <name>Zn(2+)</name>
        <dbReference type="ChEBI" id="CHEBI:29105"/>
        <label>2</label>
    </ligand>
</feature>
<feature type="binding site" evidence="1">
    <location>
        <position position="192"/>
    </location>
    <ligand>
        <name>Zn(2+)</name>
        <dbReference type="ChEBI" id="CHEBI:29105"/>
        <label>2</label>
    </ligand>
</feature>
<feature type="binding site" evidence="1">
    <location>
        <position position="203"/>
    </location>
    <ligand>
        <name>Zn(2+)</name>
        <dbReference type="ChEBI" id="CHEBI:29105"/>
        <label>1</label>
    </ligand>
</feature>
<feature type="binding site" evidence="1">
    <location>
        <position position="206"/>
    </location>
    <ligand>
        <name>Zn(2+)</name>
        <dbReference type="ChEBI" id="CHEBI:29105"/>
        <label>1</label>
    </ligand>
</feature>
<protein>
    <recommendedName>
        <fullName evidence="1">Chaperone protein DnaJ</fullName>
    </recommendedName>
</protein>
<reference key="1">
    <citation type="journal article" date="2011" name="Stand. Genomic Sci.">
        <title>Complete genome sequence of the halophilic and highly halotolerant Chromohalobacter salexigens type strain (1H11(T)).</title>
        <authorList>
            <person name="Copeland A."/>
            <person name="O'Connor K."/>
            <person name="Lucas S."/>
            <person name="Lapidus A."/>
            <person name="Berry K.W."/>
            <person name="Detter J.C."/>
            <person name="Del Rio T.G."/>
            <person name="Hammon N."/>
            <person name="Dalin E."/>
            <person name="Tice H."/>
            <person name="Pitluck S."/>
            <person name="Bruce D."/>
            <person name="Goodwin L."/>
            <person name="Han C."/>
            <person name="Tapia R."/>
            <person name="Saunders E."/>
            <person name="Schmutz J."/>
            <person name="Brettin T."/>
            <person name="Larimer F."/>
            <person name="Land M."/>
            <person name="Hauser L."/>
            <person name="Vargas C."/>
            <person name="Nieto J.J."/>
            <person name="Kyrpides N.C."/>
            <person name="Ivanova N."/>
            <person name="Goker M."/>
            <person name="Klenk H.P."/>
            <person name="Csonka L.N."/>
            <person name="Woyke T."/>
        </authorList>
    </citation>
    <scope>NUCLEOTIDE SEQUENCE [LARGE SCALE GENOMIC DNA]</scope>
    <source>
        <strain>ATCC BAA-138 / DSM 3043 / CIP 106854 / NCIMB 13768 / 1H11</strain>
    </source>
</reference>
<gene>
    <name evidence="1" type="primary">dnaJ</name>
    <name type="ordered locus">Csal_3093</name>
</gene>
<comment type="function">
    <text evidence="1">Participates actively in the response to hyperosmotic and heat shock by preventing the aggregation of stress-denatured proteins and by disaggregating proteins, also in an autonomous, DnaK-independent fashion. Unfolded proteins bind initially to DnaJ; upon interaction with the DnaJ-bound protein, DnaK hydrolyzes its bound ATP, resulting in the formation of a stable complex. GrpE releases ADP from DnaK; ATP binding to DnaK triggers the release of the substrate protein, thus completing the reaction cycle. Several rounds of ATP-dependent interactions between DnaJ, DnaK and GrpE are required for fully efficient folding. Also involved, together with DnaK and GrpE, in the DNA replication of plasmids through activation of initiation proteins.</text>
</comment>
<comment type="cofactor">
    <cofactor evidence="1">
        <name>Zn(2+)</name>
        <dbReference type="ChEBI" id="CHEBI:29105"/>
    </cofactor>
    <text evidence="1">Binds 2 Zn(2+) ions per monomer.</text>
</comment>
<comment type="subunit">
    <text evidence="1">Homodimer.</text>
</comment>
<comment type="subcellular location">
    <subcellularLocation>
        <location evidence="1">Cytoplasm</location>
    </subcellularLocation>
</comment>
<comment type="domain">
    <text evidence="1">The J domain is necessary and sufficient to stimulate DnaK ATPase activity. Zinc center 1 plays an important role in the autonomous, DnaK-independent chaperone activity of DnaJ. Zinc center 2 is essential for interaction with DnaK and for DnaJ activity.</text>
</comment>
<comment type="similarity">
    <text evidence="1">Belongs to the DnaJ family.</text>
</comment>
<sequence>MSKRDYYEVLGIERGADQKEIKKAYRRLAQKYHPDRNPDDDTAAEKFREVSEAYEVLTDEEKRSAYDQFGHAGVDGQAGGGFGGGGFGGGAGGFSDIFGDVFGDIFGGGGRRNPNAPQRGSDLRYNLELDLEDAVAGTTVDIRVPRHIECEHCDGDGAEPGSTKETCPTCHGQGQVRMQQGFFAVQQTCPTCHGAGQTIKVPCRKCHGEGRVRETRTLSVKIPAGVDTGDRIRLNNEGEAGLNGGPPGDLYVQAAIKPHPIFERDGRHLQCEVPINFIDATLGGELEVPTLDGRVKLKIPPETQTGKMFRLKGKGVKPVRGGPPGDLLCKVVLETPVNLSDEQKDLLRQFQDSLDGSNSHHSPKKTSFFDGVKKFFEDMKP</sequence>
<keyword id="KW-0143">Chaperone</keyword>
<keyword id="KW-0963">Cytoplasm</keyword>
<keyword id="KW-0235">DNA replication</keyword>
<keyword id="KW-0479">Metal-binding</keyword>
<keyword id="KW-1185">Reference proteome</keyword>
<keyword id="KW-0677">Repeat</keyword>
<keyword id="KW-0346">Stress response</keyword>
<keyword id="KW-0862">Zinc</keyword>
<keyword id="KW-0863">Zinc-finger</keyword>
<name>DNAJ_CHRSD</name>
<organism>
    <name type="scientific">Chromohalobacter salexigens (strain ATCC BAA-138 / DSM 3043 / CIP 106854 / NCIMB 13768 / 1H11)</name>
    <dbReference type="NCBI Taxonomy" id="290398"/>
    <lineage>
        <taxon>Bacteria</taxon>
        <taxon>Pseudomonadati</taxon>
        <taxon>Pseudomonadota</taxon>
        <taxon>Gammaproteobacteria</taxon>
        <taxon>Oceanospirillales</taxon>
        <taxon>Halomonadaceae</taxon>
        <taxon>Chromohalobacter</taxon>
    </lineage>
</organism>
<proteinExistence type="inferred from homology"/>